<comment type="function">
    <text evidence="1 3 4">Part of an ABC transporter complex involved in glucose import (Probable). Responsible for the translocation of the substrate across the membrane (By similarity).</text>
</comment>
<comment type="subunit">
    <text evidence="4">The complex is composed of two ATP-binding proteins (TsgD13), two transmembrane proteins (TsgB13 and TsgC13) and a solute-binding protein (TsgA13).</text>
</comment>
<comment type="subcellular location">
    <subcellularLocation>
        <location evidence="4">Cell membrane</location>
        <topology evidence="4">Multi-pass membrane protein</topology>
    </subcellularLocation>
</comment>
<comment type="disruption phenotype">
    <text evidence="3">Mutant with a disruption within tsgB13 or tsgD13 cannot use glucose for nitrate respirative growth. However, the mutant can grow aerobically using glucose as the sole energy source.</text>
</comment>
<comment type="similarity">
    <text evidence="4">Belongs to the binding-protein-dependent transport system permease family.</text>
</comment>
<protein>
    <recommendedName>
        <fullName>Glucose ABC transporter permease protein TsgB13</fullName>
    </recommendedName>
</protein>
<gene>
    <name type="primary">tsgB13</name>
    <name type="ordered locus">HVO_B0315</name>
</gene>
<sequence>MNVELQLDPRRTVPAWLAYGTPVLTVLAALAVGGVALVALNVDPVDAYGVMFVETLTSQFGLTEVLVRAVPLILAGLAVYLPLKAGLFNIGAEGQLLLGALAGTWVAVNVSLPAVALLPLMFLAACVAGAFWAGIPAWLRAKWDVNEIITSLLLTFVAQELQSYLLRGPMQGGTGNFPQSARFSDAATLPPLAGLVPGGESIPLFADVHAGLLVAVAAVVATYVVMTKTRLGFEVTFVGSNDEAARQAGMSRHTVYLFVFLLGGAFAALGGIAEIAGSQGRFRAAFAPGYGFTAIPIALLGRNSAVKVTLAGLFFAVLFVGGSSVEVAFGVPAALVEIIQALVILFLITSEFFKRYRVGIAFDRRGNDAPADATGGDARW</sequence>
<proteinExistence type="inferred from homology"/>
<accession>D4GPW2</accession>
<accession>Q9Y8J9</accession>
<reference key="1">
    <citation type="journal article" date="2010" name="PLoS ONE">
        <title>The complete genome sequence of Haloferax volcanii DS2, a model archaeon.</title>
        <authorList>
            <person name="Hartman A.L."/>
            <person name="Norais C."/>
            <person name="Badger J.H."/>
            <person name="Delmas S."/>
            <person name="Haldenby S."/>
            <person name="Madupu R."/>
            <person name="Robinson J."/>
            <person name="Khouri H."/>
            <person name="Ren Q."/>
            <person name="Lowe T.M."/>
            <person name="Maupin-Furlow J."/>
            <person name="Pohlschroder M."/>
            <person name="Daniels C."/>
            <person name="Pfeiffer F."/>
            <person name="Allers T."/>
            <person name="Eisen J.A."/>
        </authorList>
    </citation>
    <scope>NUCLEOTIDE SEQUENCE [LARGE SCALE GENOMIC DNA]</scope>
    <source>
        <strain>ATCC 29605 / DSM 3757 / JCM 8879 / NBRC 14742 / NCIMB 2012 / VKM B-1768 / DS2</strain>
        <plasmid>pHV3</plasmid>
    </source>
</reference>
<reference key="2">
    <citation type="journal article" date="1999" name="Genetics">
        <title>Genetic identification of three ABC transporters as essential elements for nitrate respiration in Haloferax volcanii.</title>
        <authorList>
            <person name="Wanner C."/>
            <person name="Soppa J."/>
        </authorList>
    </citation>
    <scope>NUCLEOTIDE SEQUENCE [GENOMIC DNA] OF 1-140</scope>
    <scope>FUNCTION</scope>
    <scope>DISRUPTION PHENOTYPE</scope>
    <source>
        <strain>DS2 / WR 340</strain>
    </source>
</reference>
<dbReference type="EMBL" id="CP001953">
    <property type="protein sequence ID" value="ADE01501.1"/>
    <property type="molecule type" value="Genomic_DNA"/>
</dbReference>
<dbReference type="EMBL" id="AJ238879">
    <property type="protein sequence ID" value="CAB42545.1"/>
    <property type="molecule type" value="Genomic_DNA"/>
</dbReference>
<dbReference type="RefSeq" id="WP_004041227.1">
    <property type="nucleotide sequence ID" value="NC_013964.1"/>
</dbReference>
<dbReference type="PaxDb" id="309800-C498_02090"/>
<dbReference type="EnsemblBacteria" id="ADE01501">
    <property type="protein sequence ID" value="ADE01501"/>
    <property type="gene ID" value="HVO_B0315"/>
</dbReference>
<dbReference type="GeneID" id="8919186"/>
<dbReference type="KEGG" id="hvo:HVO_B0315"/>
<dbReference type="eggNOG" id="arCOG00260">
    <property type="taxonomic scope" value="Archaea"/>
</dbReference>
<dbReference type="HOGENOM" id="CLU_040769_0_0_2"/>
<dbReference type="OrthoDB" id="86231at2157"/>
<dbReference type="Proteomes" id="UP000008243">
    <property type="component" value="Plasmid pHV3"/>
</dbReference>
<dbReference type="GO" id="GO:0005886">
    <property type="term" value="C:plasma membrane"/>
    <property type="evidence" value="ECO:0007669"/>
    <property type="project" value="UniProtKB-SubCell"/>
</dbReference>
<dbReference type="GO" id="GO:0022857">
    <property type="term" value="F:transmembrane transporter activity"/>
    <property type="evidence" value="ECO:0007669"/>
    <property type="project" value="InterPro"/>
</dbReference>
<dbReference type="CDD" id="cd06580">
    <property type="entry name" value="TM_PBP1_transp_TpRbsC_like"/>
    <property type="match status" value="1"/>
</dbReference>
<dbReference type="InterPro" id="IPR001851">
    <property type="entry name" value="ABC_transp_permease"/>
</dbReference>
<dbReference type="PANTHER" id="PTHR47089">
    <property type="entry name" value="ABC TRANSPORTER, PERMEASE PROTEIN"/>
    <property type="match status" value="1"/>
</dbReference>
<dbReference type="PANTHER" id="PTHR47089:SF1">
    <property type="entry name" value="GUANOSINE ABC TRANSPORTER PERMEASE PROTEIN NUPP"/>
    <property type="match status" value="1"/>
</dbReference>
<dbReference type="Pfam" id="PF02653">
    <property type="entry name" value="BPD_transp_2"/>
    <property type="match status" value="1"/>
</dbReference>
<feature type="chain" id="PRO_0000420945" description="Glucose ABC transporter permease protein TsgB13">
    <location>
        <begin position="1"/>
        <end position="380"/>
    </location>
</feature>
<feature type="transmembrane region" description="Helical" evidence="2">
    <location>
        <begin position="20"/>
        <end position="40"/>
    </location>
</feature>
<feature type="transmembrane region" description="Helical" evidence="2">
    <location>
        <begin position="59"/>
        <end position="81"/>
    </location>
</feature>
<feature type="transmembrane region" description="Helical" evidence="2">
    <location>
        <begin position="94"/>
        <end position="114"/>
    </location>
</feature>
<feature type="transmembrane region" description="Helical" evidence="2">
    <location>
        <begin position="115"/>
        <end position="135"/>
    </location>
</feature>
<feature type="transmembrane region" description="Helical" evidence="2">
    <location>
        <begin position="148"/>
        <end position="166"/>
    </location>
</feature>
<feature type="transmembrane region" description="Helical" evidence="2">
    <location>
        <begin position="202"/>
        <end position="222"/>
    </location>
</feature>
<feature type="transmembrane region" description="Helical" evidence="2">
    <location>
        <begin position="255"/>
        <end position="275"/>
    </location>
</feature>
<feature type="transmembrane region" description="Helical" evidence="2">
    <location>
        <begin position="282"/>
        <end position="301"/>
    </location>
</feature>
<feature type="transmembrane region" description="Helical" evidence="2">
    <location>
        <begin position="305"/>
        <end position="325"/>
    </location>
</feature>
<feature type="transmembrane region" description="Helical" evidence="2">
    <location>
        <begin position="328"/>
        <end position="348"/>
    </location>
</feature>
<evidence type="ECO:0000250" key="1"/>
<evidence type="ECO:0000255" key="2"/>
<evidence type="ECO:0000269" key="3">
    <source>
    </source>
</evidence>
<evidence type="ECO:0000305" key="4"/>
<geneLocation type="plasmid">
    <name>pHV3</name>
</geneLocation>
<keyword id="KW-1003">Cell membrane</keyword>
<keyword id="KW-0472">Membrane</keyword>
<keyword id="KW-0614">Plasmid</keyword>
<keyword id="KW-1185">Reference proteome</keyword>
<keyword id="KW-0762">Sugar transport</keyword>
<keyword id="KW-0812">Transmembrane</keyword>
<keyword id="KW-1133">Transmembrane helix</keyword>
<keyword id="KW-0813">Transport</keyword>
<organism>
    <name type="scientific">Haloferax volcanii (strain ATCC 29605 / DSM 3757 / JCM 8879 / NBRC 14742 / NCIMB 2012 / VKM B-1768 / DS2)</name>
    <name type="common">Halobacterium volcanii</name>
    <dbReference type="NCBI Taxonomy" id="309800"/>
    <lineage>
        <taxon>Archaea</taxon>
        <taxon>Methanobacteriati</taxon>
        <taxon>Methanobacteriota</taxon>
        <taxon>Stenosarchaea group</taxon>
        <taxon>Halobacteria</taxon>
        <taxon>Halobacteriales</taxon>
        <taxon>Haloferacaceae</taxon>
        <taxon>Haloferax</taxon>
    </lineage>
</organism>
<name>TSGBD_HALVD</name>